<proteinExistence type="inferred from homology"/>
<gene>
    <name evidence="1" type="primary">ruvA</name>
    <name type="ordered locus">Spy49_1756c</name>
</gene>
<feature type="chain" id="PRO_1000090378" description="Holliday junction branch migration complex subunit RuvA">
    <location>
        <begin position="1"/>
        <end position="198"/>
    </location>
</feature>
<feature type="region of interest" description="Domain I" evidence="1">
    <location>
        <begin position="1"/>
        <end position="63"/>
    </location>
</feature>
<feature type="region of interest" description="Domain II" evidence="1">
    <location>
        <begin position="64"/>
        <end position="142"/>
    </location>
</feature>
<feature type="region of interest" description="Flexible linker" evidence="1">
    <location>
        <begin position="143"/>
        <end position="147"/>
    </location>
</feature>
<feature type="region of interest" description="Domain III" evidence="1">
    <location>
        <begin position="148"/>
        <end position="198"/>
    </location>
</feature>
<accession>B5XJ07</accession>
<name>RUVA_STRPZ</name>
<comment type="function">
    <text evidence="1">The RuvA-RuvB-RuvC complex processes Holliday junction (HJ) DNA during genetic recombination and DNA repair, while the RuvA-RuvB complex plays an important role in the rescue of blocked DNA replication forks via replication fork reversal (RFR). RuvA specifically binds to HJ cruciform DNA, conferring on it an open structure. The RuvB hexamer acts as an ATP-dependent pump, pulling dsDNA into and through the RuvAB complex. HJ branch migration allows RuvC to scan DNA until it finds its consensus sequence, where it cleaves and resolves the cruciform DNA.</text>
</comment>
<comment type="subunit">
    <text evidence="1">Homotetramer. Forms an RuvA(8)-RuvB(12)-Holliday junction (HJ) complex. HJ DNA is sandwiched between 2 RuvA tetramers; dsDNA enters through RuvA and exits via RuvB. An RuvB hexamer assembles on each DNA strand where it exits the tetramer. Each RuvB hexamer is contacted by two RuvA subunits (via domain III) on 2 adjacent RuvB subunits; this complex drives branch migration. In the full resolvosome a probable DNA-RuvA(4)-RuvB(12)-RuvC(2) complex forms which resolves the HJ.</text>
</comment>
<comment type="subcellular location">
    <subcellularLocation>
        <location evidence="1">Cytoplasm</location>
    </subcellularLocation>
</comment>
<comment type="domain">
    <text evidence="1">Has three domains with a flexible linker between the domains II and III and assumes an 'L' shape. Domain III is highly mobile and contacts RuvB.</text>
</comment>
<comment type="similarity">
    <text evidence="1">Belongs to the RuvA family.</text>
</comment>
<evidence type="ECO:0000255" key="1">
    <source>
        <dbReference type="HAMAP-Rule" id="MF_00031"/>
    </source>
</evidence>
<dbReference type="EMBL" id="CP000829">
    <property type="protein sequence ID" value="ACI62006.1"/>
    <property type="molecule type" value="Genomic_DNA"/>
</dbReference>
<dbReference type="SMR" id="B5XJ07"/>
<dbReference type="KEGG" id="soz:Spy49_1756c"/>
<dbReference type="HOGENOM" id="CLU_087936_1_0_9"/>
<dbReference type="Proteomes" id="UP000001039">
    <property type="component" value="Chromosome"/>
</dbReference>
<dbReference type="GO" id="GO:0005737">
    <property type="term" value="C:cytoplasm"/>
    <property type="evidence" value="ECO:0007669"/>
    <property type="project" value="UniProtKB-SubCell"/>
</dbReference>
<dbReference type="GO" id="GO:0009379">
    <property type="term" value="C:Holliday junction helicase complex"/>
    <property type="evidence" value="ECO:0007669"/>
    <property type="project" value="InterPro"/>
</dbReference>
<dbReference type="GO" id="GO:0048476">
    <property type="term" value="C:Holliday junction resolvase complex"/>
    <property type="evidence" value="ECO:0007669"/>
    <property type="project" value="UniProtKB-UniRule"/>
</dbReference>
<dbReference type="GO" id="GO:0005524">
    <property type="term" value="F:ATP binding"/>
    <property type="evidence" value="ECO:0007669"/>
    <property type="project" value="InterPro"/>
</dbReference>
<dbReference type="GO" id="GO:0000400">
    <property type="term" value="F:four-way junction DNA binding"/>
    <property type="evidence" value="ECO:0007669"/>
    <property type="project" value="UniProtKB-UniRule"/>
</dbReference>
<dbReference type="GO" id="GO:0009378">
    <property type="term" value="F:four-way junction helicase activity"/>
    <property type="evidence" value="ECO:0007669"/>
    <property type="project" value="InterPro"/>
</dbReference>
<dbReference type="GO" id="GO:0006310">
    <property type="term" value="P:DNA recombination"/>
    <property type="evidence" value="ECO:0007669"/>
    <property type="project" value="UniProtKB-UniRule"/>
</dbReference>
<dbReference type="GO" id="GO:0006281">
    <property type="term" value="P:DNA repair"/>
    <property type="evidence" value="ECO:0007669"/>
    <property type="project" value="UniProtKB-UniRule"/>
</dbReference>
<dbReference type="CDD" id="cd14332">
    <property type="entry name" value="UBA_RuvA_C"/>
    <property type="match status" value="1"/>
</dbReference>
<dbReference type="Gene3D" id="1.10.150.20">
    <property type="entry name" value="5' to 3' exonuclease, C-terminal subdomain"/>
    <property type="match status" value="1"/>
</dbReference>
<dbReference type="Gene3D" id="1.10.8.10">
    <property type="entry name" value="DNA helicase RuvA subunit, C-terminal domain"/>
    <property type="match status" value="1"/>
</dbReference>
<dbReference type="Gene3D" id="2.40.50.140">
    <property type="entry name" value="Nucleic acid-binding proteins"/>
    <property type="match status" value="1"/>
</dbReference>
<dbReference type="HAMAP" id="MF_00031">
    <property type="entry name" value="DNA_HJ_migration_RuvA"/>
    <property type="match status" value="1"/>
</dbReference>
<dbReference type="InterPro" id="IPR013849">
    <property type="entry name" value="DNA_helicase_Holl-junc_RuvA_I"/>
</dbReference>
<dbReference type="InterPro" id="IPR003583">
    <property type="entry name" value="Hlx-hairpin-Hlx_DNA-bd_motif"/>
</dbReference>
<dbReference type="InterPro" id="IPR012340">
    <property type="entry name" value="NA-bd_OB-fold"/>
</dbReference>
<dbReference type="InterPro" id="IPR000085">
    <property type="entry name" value="RuvA"/>
</dbReference>
<dbReference type="InterPro" id="IPR010994">
    <property type="entry name" value="RuvA_2-like"/>
</dbReference>
<dbReference type="InterPro" id="IPR011114">
    <property type="entry name" value="RuvA_C"/>
</dbReference>
<dbReference type="InterPro" id="IPR036267">
    <property type="entry name" value="RuvA_C_sf"/>
</dbReference>
<dbReference type="NCBIfam" id="TIGR00084">
    <property type="entry name" value="ruvA"/>
    <property type="match status" value="1"/>
</dbReference>
<dbReference type="Pfam" id="PF14520">
    <property type="entry name" value="HHH_5"/>
    <property type="match status" value="1"/>
</dbReference>
<dbReference type="Pfam" id="PF07499">
    <property type="entry name" value="RuvA_C"/>
    <property type="match status" value="1"/>
</dbReference>
<dbReference type="Pfam" id="PF01330">
    <property type="entry name" value="RuvA_N"/>
    <property type="match status" value="1"/>
</dbReference>
<dbReference type="SMART" id="SM00278">
    <property type="entry name" value="HhH1"/>
    <property type="match status" value="2"/>
</dbReference>
<dbReference type="SUPFAM" id="SSF46929">
    <property type="entry name" value="DNA helicase RuvA subunit, C-terminal domain"/>
    <property type="match status" value="1"/>
</dbReference>
<dbReference type="SUPFAM" id="SSF50249">
    <property type="entry name" value="Nucleic acid-binding proteins"/>
    <property type="match status" value="1"/>
</dbReference>
<dbReference type="SUPFAM" id="SSF47781">
    <property type="entry name" value="RuvA domain 2-like"/>
    <property type="match status" value="1"/>
</dbReference>
<organism>
    <name type="scientific">Streptococcus pyogenes serotype M49 (strain NZ131)</name>
    <dbReference type="NCBI Taxonomy" id="471876"/>
    <lineage>
        <taxon>Bacteria</taxon>
        <taxon>Bacillati</taxon>
        <taxon>Bacillota</taxon>
        <taxon>Bacilli</taxon>
        <taxon>Lactobacillales</taxon>
        <taxon>Streptococcaceae</taxon>
        <taxon>Streptococcus</taxon>
    </lineage>
</organism>
<reference key="1">
    <citation type="journal article" date="2008" name="J. Bacteriol.">
        <title>Genome sequence of a nephritogenic and highly transformable M49 strain of Streptococcus pyogenes.</title>
        <authorList>
            <person name="McShan W.M."/>
            <person name="Ferretti J.J."/>
            <person name="Karasawa T."/>
            <person name="Suvorov A.N."/>
            <person name="Lin S."/>
            <person name="Qin B."/>
            <person name="Jia H."/>
            <person name="Kenton S."/>
            <person name="Najar F."/>
            <person name="Wu H."/>
            <person name="Scott J."/>
            <person name="Roe B.A."/>
            <person name="Savic D.J."/>
        </authorList>
    </citation>
    <scope>NUCLEOTIDE SEQUENCE [LARGE SCALE GENOMIC DNA]</scope>
    <source>
        <strain>NZ131</strain>
    </source>
</reference>
<keyword id="KW-0963">Cytoplasm</keyword>
<keyword id="KW-0227">DNA damage</keyword>
<keyword id="KW-0233">DNA recombination</keyword>
<keyword id="KW-0234">DNA repair</keyword>
<keyword id="KW-0238">DNA-binding</keyword>
<protein>
    <recommendedName>
        <fullName evidence="1">Holliday junction branch migration complex subunit RuvA</fullName>
    </recommendedName>
</protein>
<sequence length="198" mass="21847">MYDYIKGQLTKITAKYIVVEANGLGYMINVANPYSFTHSVNQLVTIYLHQVIREDAHLLFGFHTEDEKDVFLKLISVSGIGPTTALAIVAVDDNEGLVNAIDNSDIKYLMKFPKIGKKTAQQMVLDLAGKFVEAPQETGHTKARSNKAGNTQLDEAIEALLALGYTATELKKIRAFFEGTSETAEQYIKSALKLLMKG</sequence>